<sequence>MPTRKSNTYLSLVNSYLIDSPQPSSINYWWNLGSLLGLCLVIQIASGVFLAMHYSSNIELAFDSVEHIMRDVNAGWLIRYIHANGASFFFICMYLHIGKALYYGSYKQPRVMLWVIGVVIFILTMAIAFMGYCLVYGQMSHWGATVITNLLSAIPFIGNDIVPFIWGGFSVSNPTIQRFFALHFLLPFILAALVCMHLMALHVHGSSNPVGITGNIDRLPMHPYFIFKDLITVFVFLLIFSLFVFYSPNTLGHPDNYIPGNPMVTPPSIVPEWYLLPFYAILRSIPDKLGGVIAMFGAILILLSLPYTDRSIIRGNSFKVLSKLAFYLFVFNFILLGNLGQLHVEVPYIQLGQFATAYYFAHYIIVVPVISTLENILYYIGTQTRVK</sequence>
<comment type="function">
    <text evidence="6 7">Component of the ubiquinol-cytochrome c oxidoreductase, a multisubunit transmembrane complex that is part of the mitochondrial electron transport chain which drives oxidative phosphorylation (PubMed:34525326, PubMed:36923588). The complex plays an important role in the uptake of multiple carbon sources present in different host niches (PubMed:36923588).</text>
</comment>
<comment type="cofactor">
    <cofactor evidence="2">
        <name>heme b</name>
        <dbReference type="ChEBI" id="CHEBI:60344"/>
    </cofactor>
    <text evidence="2">Binds 2 heme b groups non-covalently.</text>
</comment>
<comment type="subunit">
    <text evidence="6">Component of the ubiquinol-cytochrome c oxidoreductase (cytochrome b-c1 complex, complex III, CIII), a multisubunit enzyme composed of 10 subunits. The complex is composed of 3 respiratory subunits cytochrome b (COB), cytochrome c1 (CYT1) and Rieske protein (RIP1), 2 core protein subunits COR1 and QCR2, and 5 low-molecular weight protein subunits QCR6, QCR7, QCR8, QCR9 and QCR10. The complex exists as an obligatory dimer and forms supercomplexes (SCs) in the inner mitochondrial membrane with a monomer or a dimer of cytochrome c oxidase (complex IV, CIV), resulting in 2 different assemblies (supercomplexes III(2)IV and III(2)IV(2)).</text>
</comment>
<comment type="subcellular location">
    <subcellularLocation>
        <location evidence="2">Mitochondrion inner membrane</location>
        <topology evidence="2">Multi-pass membrane protein</topology>
    </subcellularLocation>
</comment>
<comment type="disruption phenotype">
    <text evidence="7">Leads to lethality, showing that it is an essential gene.</text>
</comment>
<comment type="miscellaneous">
    <text evidence="1">Heme 1 (or BL or b562) is low-potential and absorbs at about 562 nm, and heme 2 (or BH or b566) is high-potential and absorbs at about 566 nm.</text>
</comment>
<comment type="similarity">
    <text evidence="4 5">Belongs to the cytochrome b family.</text>
</comment>
<comment type="caution">
    <text evidence="2">The protein contains only eight transmembrane helices, not nine as predicted by bioinformatics tools.</text>
</comment>
<keyword id="KW-0002">3D-structure</keyword>
<keyword id="KW-0249">Electron transport</keyword>
<keyword id="KW-0349">Heme</keyword>
<keyword id="KW-0408">Iron</keyword>
<keyword id="KW-0472">Membrane</keyword>
<keyword id="KW-0479">Metal-binding</keyword>
<keyword id="KW-0496">Mitochondrion</keyword>
<keyword id="KW-0999">Mitochondrion inner membrane</keyword>
<keyword id="KW-1185">Reference proteome</keyword>
<keyword id="KW-0679">Respiratory chain</keyword>
<keyword id="KW-0812">Transmembrane</keyword>
<keyword id="KW-1133">Transmembrane helix</keyword>
<keyword id="KW-0813">Transport</keyword>
<reference key="1">
    <citation type="journal article" date="2001" name="J. Bacteriol.">
        <title>Infrequent genetic exchange and recombination in the mitochondrial genome of Candida albicans.</title>
        <authorList>
            <person name="Anderson J.B."/>
            <person name="Wickens C."/>
            <person name="Khan M."/>
            <person name="Cowen L.E."/>
            <person name="Federspiel N.A."/>
            <person name="Jones T."/>
            <person name="Kohn L.M."/>
        </authorList>
    </citation>
    <scope>NUCLEOTIDE SEQUENCE [LARGE SCALE GENOMIC DNA]</scope>
    <source>
        <strain>SC5314 / ATCC MYA-2876</strain>
    </source>
</reference>
<reference key="2">
    <citation type="journal article" date="2023" name="Front. Cell. Infect. Microbiol.">
        <title>QCR7 affects the virulence of Candida albicans and the uptake of multiple carbon sources present in different host niches.</title>
        <authorList>
            <person name="Zeng L."/>
            <person name="Huang Y."/>
            <person name="Tan J."/>
            <person name="Peng J."/>
            <person name="Hu N."/>
            <person name="Liu Q."/>
            <person name="Cao Y."/>
            <person name="Zhang Y."/>
            <person name="Chen J."/>
            <person name="Huang X."/>
        </authorList>
    </citation>
    <scope>FUNCTION</scope>
    <scope>DISRUPTION PHENOTYPE</scope>
</reference>
<reference evidence="9 10 11 12 13" key="3">
    <citation type="journal article" date="2022" name="Structure">
        <title>Rieske head domain dynamics and indazole-derivative inhibition of Candida albicans complex III.</title>
        <authorList>
            <person name="Di Trani J.M."/>
            <person name="Liu Z."/>
            <person name="Whitesell L."/>
            <person name="Brzezinski P."/>
            <person name="Cowen L.E."/>
            <person name="Rubinstein J.L."/>
        </authorList>
    </citation>
    <scope>STRUCTURE BY ELECTRON MICROSCOPY (3.00 ANGSTROMS) OF THE HOMODIMERIC RESPIRATORY COMPLEX III</scope>
    <scope>FUNCTION</scope>
    <scope>SUBUNIT</scope>
</reference>
<protein>
    <recommendedName>
        <fullName evidence="8">Cytochrome b</fullName>
    </recommendedName>
    <alternativeName>
        <fullName evidence="8">Complex III subunit 3</fullName>
    </alternativeName>
    <alternativeName>
        <fullName evidence="8">Complex III subunit III</fullName>
    </alternativeName>
    <alternativeName>
        <fullName evidence="8">Cytochrome b-c1 complex subunit 3</fullName>
    </alternativeName>
    <alternativeName>
        <fullName evidence="8">Ubiquinol-cytochrome-c reductase complex cytochrome b subunit</fullName>
    </alternativeName>
</protein>
<organism>
    <name type="scientific">Candida albicans (strain SC5314 / ATCC MYA-2876)</name>
    <name type="common">Yeast</name>
    <dbReference type="NCBI Taxonomy" id="237561"/>
    <lineage>
        <taxon>Eukaryota</taxon>
        <taxon>Fungi</taxon>
        <taxon>Dikarya</taxon>
        <taxon>Ascomycota</taxon>
        <taxon>Saccharomycotina</taxon>
        <taxon>Pichiomycetes</taxon>
        <taxon>Debaryomycetaceae</taxon>
        <taxon>Candida/Lodderomyces clade</taxon>
        <taxon>Candida</taxon>
    </lineage>
</organism>
<accession>P0C8L0</accession>
<gene>
    <name evidence="8" type="primary">COB</name>
    <name type="synonym">CYTB</name>
    <name type="ordered locus">CM_00330W</name>
    <name type="ORF">CaalfMp11</name>
</gene>
<proteinExistence type="evidence at protein level"/>
<evidence type="ECO:0000250" key="1"/>
<evidence type="ECO:0000250" key="2">
    <source>
        <dbReference type="UniProtKB" id="P00163"/>
    </source>
</evidence>
<evidence type="ECO:0000255" key="3"/>
<evidence type="ECO:0000255" key="4">
    <source>
        <dbReference type="PROSITE-ProRule" id="PRU00967"/>
    </source>
</evidence>
<evidence type="ECO:0000255" key="5">
    <source>
        <dbReference type="PROSITE-ProRule" id="PRU00968"/>
    </source>
</evidence>
<evidence type="ECO:0000269" key="6">
    <source>
    </source>
</evidence>
<evidence type="ECO:0000269" key="7">
    <source>
    </source>
</evidence>
<evidence type="ECO:0000303" key="8">
    <source>
    </source>
</evidence>
<evidence type="ECO:0007744" key="9">
    <source>
        <dbReference type="PDB" id="7RJA"/>
    </source>
</evidence>
<evidence type="ECO:0007744" key="10">
    <source>
        <dbReference type="PDB" id="7RJB"/>
    </source>
</evidence>
<evidence type="ECO:0007744" key="11">
    <source>
        <dbReference type="PDB" id="7RJC"/>
    </source>
</evidence>
<evidence type="ECO:0007744" key="12">
    <source>
        <dbReference type="PDB" id="7RJD"/>
    </source>
</evidence>
<evidence type="ECO:0007744" key="13">
    <source>
        <dbReference type="PDB" id="7RJE"/>
    </source>
</evidence>
<evidence type="ECO:0007829" key="14">
    <source>
        <dbReference type="PDB" id="7RJA"/>
    </source>
</evidence>
<evidence type="ECO:0007829" key="15">
    <source>
        <dbReference type="PDB" id="7RJE"/>
    </source>
</evidence>
<geneLocation type="mitochondrion"/>
<feature type="transmembrane region" description="Helical" evidence="3 5">
    <location>
        <begin position="32"/>
        <end position="52"/>
    </location>
</feature>
<feature type="transmembrane region" description="Helical" evidence="5">
    <location>
        <begin position="85"/>
        <end position="105"/>
    </location>
</feature>
<feature type="transmembrane region" description="Helical" evidence="5">
    <location>
        <begin position="116"/>
        <end position="136"/>
    </location>
</feature>
<feature type="transmembrane region" description="Helical" evidence="5">
    <location>
        <begin position="151"/>
        <end position="171"/>
    </location>
</feature>
<feature type="transmembrane region" description="Helical" evidence="5">
    <location>
        <begin position="179"/>
        <end position="199"/>
    </location>
</feature>
<feature type="transmembrane region" description="Helical" evidence="3 4">
    <location>
        <begin position="225"/>
        <end position="245"/>
    </location>
</feature>
<feature type="transmembrane region" description="Helical" evidence="4">
    <location>
        <begin position="289"/>
        <end position="309"/>
    </location>
</feature>
<feature type="transmembrane region" description="Helical" evidence="4">
    <location>
        <begin position="324"/>
        <end position="344"/>
    </location>
</feature>
<feature type="transmembrane region" description="Helical" evidence="4">
    <location>
        <begin position="350"/>
        <end position="370"/>
    </location>
</feature>
<feature type="binding site" description="axial binding residue" evidence="5">
    <location>
        <position position="82"/>
    </location>
    <ligand>
        <name>heme b</name>
        <dbReference type="ChEBI" id="CHEBI:60344"/>
        <label>b562</label>
    </ligand>
    <ligandPart>
        <name>Fe</name>
        <dbReference type="ChEBI" id="CHEBI:18248"/>
    </ligandPart>
</feature>
<feature type="binding site" description="axial binding residue" evidence="5">
    <location>
        <position position="96"/>
    </location>
    <ligand>
        <name>heme b</name>
        <dbReference type="ChEBI" id="CHEBI:60344"/>
        <label>b566</label>
    </ligand>
    <ligandPart>
        <name>Fe</name>
        <dbReference type="ChEBI" id="CHEBI:18248"/>
    </ligandPart>
</feature>
<feature type="binding site" description="axial binding residue" evidence="5">
    <location>
        <position position="183"/>
    </location>
    <ligand>
        <name>heme b</name>
        <dbReference type="ChEBI" id="CHEBI:60344"/>
        <label>b562</label>
    </ligand>
    <ligandPart>
        <name>Fe</name>
        <dbReference type="ChEBI" id="CHEBI:18248"/>
    </ligandPart>
</feature>
<feature type="binding site" description="axial binding residue" evidence="5">
    <location>
        <position position="197"/>
    </location>
    <ligand>
        <name>heme b</name>
        <dbReference type="ChEBI" id="CHEBI:60344"/>
        <label>b566</label>
    </ligand>
    <ligandPart>
        <name>Fe</name>
        <dbReference type="ChEBI" id="CHEBI:18248"/>
    </ligandPart>
</feature>
<feature type="helix" evidence="14">
    <location>
        <begin position="3"/>
        <end position="6"/>
    </location>
</feature>
<feature type="helix" evidence="14">
    <location>
        <begin position="8"/>
        <end position="17"/>
    </location>
</feature>
<feature type="strand" evidence="15">
    <location>
        <begin position="21"/>
        <end position="23"/>
    </location>
</feature>
<feature type="helix" evidence="14">
    <location>
        <begin position="29"/>
        <end position="31"/>
    </location>
</feature>
<feature type="helix" evidence="14">
    <location>
        <begin position="32"/>
        <end position="51"/>
    </location>
</feature>
<feature type="turn" evidence="14">
    <location>
        <begin position="58"/>
        <end position="60"/>
    </location>
</feature>
<feature type="helix" evidence="14">
    <location>
        <begin position="61"/>
        <end position="70"/>
    </location>
</feature>
<feature type="strand" evidence="14">
    <location>
        <begin position="72"/>
        <end position="74"/>
    </location>
</feature>
<feature type="helix" evidence="14">
    <location>
        <begin position="75"/>
        <end position="102"/>
    </location>
</feature>
<feature type="turn" evidence="14">
    <location>
        <begin position="103"/>
        <end position="106"/>
    </location>
</feature>
<feature type="helix" evidence="14">
    <location>
        <begin position="108"/>
        <end position="110"/>
    </location>
</feature>
<feature type="helix" evidence="14">
    <location>
        <begin position="111"/>
        <end position="135"/>
    </location>
</feature>
<feature type="helix" evidence="14">
    <location>
        <begin position="138"/>
        <end position="151"/>
    </location>
</feature>
<feature type="turn" evidence="14">
    <location>
        <begin position="155"/>
        <end position="157"/>
    </location>
</feature>
<feature type="helix" evidence="14">
    <location>
        <begin position="158"/>
        <end position="166"/>
    </location>
</feature>
<feature type="strand" evidence="14">
    <location>
        <begin position="168"/>
        <end position="172"/>
    </location>
</feature>
<feature type="helix" evidence="14">
    <location>
        <begin position="173"/>
        <end position="204"/>
    </location>
</feature>
<feature type="helix" evidence="15">
    <location>
        <begin position="214"/>
        <end position="216"/>
    </location>
</feature>
<feature type="strand" evidence="14">
    <location>
        <begin position="217"/>
        <end position="219"/>
    </location>
</feature>
<feature type="turn" evidence="14">
    <location>
        <begin position="222"/>
        <end position="225"/>
    </location>
</feature>
<feature type="helix" evidence="14">
    <location>
        <begin position="226"/>
        <end position="244"/>
    </location>
</feature>
<feature type="strand" evidence="14">
    <location>
        <begin position="250"/>
        <end position="252"/>
    </location>
</feature>
<feature type="helix" evidence="14">
    <location>
        <begin position="254"/>
        <end position="257"/>
    </location>
</feature>
<feature type="helix" evidence="14">
    <location>
        <begin position="273"/>
        <end position="275"/>
    </location>
</feature>
<feature type="helix" evidence="14">
    <location>
        <begin position="276"/>
        <end position="284"/>
    </location>
</feature>
<feature type="strand" evidence="14">
    <location>
        <begin position="285"/>
        <end position="287"/>
    </location>
</feature>
<feature type="helix" evidence="14">
    <location>
        <begin position="288"/>
        <end position="308"/>
    </location>
</feature>
<feature type="strand" evidence="15">
    <location>
        <begin position="312"/>
        <end position="316"/>
    </location>
</feature>
<feature type="helix" evidence="14">
    <location>
        <begin position="320"/>
        <end position="341"/>
    </location>
</feature>
<feature type="helix" evidence="14">
    <location>
        <begin position="346"/>
        <end position="364"/>
    </location>
</feature>
<feature type="helix" evidence="14">
    <location>
        <begin position="366"/>
        <end position="382"/>
    </location>
</feature>
<dbReference type="EMBL" id="AF285261">
    <property type="status" value="NOT_ANNOTATED_CDS"/>
    <property type="molecule type" value="Genomic_DNA"/>
</dbReference>
<dbReference type="PDB" id="7RJA">
    <property type="method" value="EM"/>
    <property type="resolution" value="3.00 A"/>
    <property type="chains" value="K/T=1-387"/>
</dbReference>
<dbReference type="PDB" id="7RJB">
    <property type="method" value="EM"/>
    <property type="resolution" value="3.20 A"/>
    <property type="chains" value="K=1-387"/>
</dbReference>
<dbReference type="PDB" id="7RJC">
    <property type="method" value="EM"/>
    <property type="resolution" value="3.30 A"/>
    <property type="chains" value="K=1-387"/>
</dbReference>
<dbReference type="PDB" id="7RJD">
    <property type="method" value="EM"/>
    <property type="resolution" value="3.20 A"/>
    <property type="chains" value="K=1-387"/>
</dbReference>
<dbReference type="PDB" id="7RJE">
    <property type="method" value="EM"/>
    <property type="resolution" value="3.30 A"/>
    <property type="chains" value="K/T=1-387"/>
</dbReference>
<dbReference type="PDBsum" id="7RJA"/>
<dbReference type="PDBsum" id="7RJB"/>
<dbReference type="PDBsum" id="7RJC"/>
<dbReference type="PDBsum" id="7RJD"/>
<dbReference type="PDBsum" id="7RJE"/>
<dbReference type="EMDB" id="EMD-24482"/>
<dbReference type="EMDB" id="EMD-24483"/>
<dbReference type="EMDB" id="EMD-24484"/>
<dbReference type="EMDB" id="EMD-24485"/>
<dbReference type="EMDB" id="EMD-24486"/>
<dbReference type="SMR" id="P0C8L0"/>
<dbReference type="FunCoup" id="P0C8L0">
    <property type="interactions" value="663"/>
</dbReference>
<dbReference type="STRING" id="237561.P0C8L0"/>
<dbReference type="ChEMBL" id="CHEMBL4296307"/>
<dbReference type="EnsemblFungi" id="CM_00330W-T">
    <property type="protein sequence ID" value="CM_00330W-T-p1"/>
    <property type="gene ID" value="CM_00330W"/>
</dbReference>
<dbReference type="CGD" id="CAL0000196083">
    <property type="gene designation" value="COB"/>
</dbReference>
<dbReference type="VEuPathDB" id="FungiDB:CM_00330W"/>
<dbReference type="InParanoid" id="P0C8L0"/>
<dbReference type="Proteomes" id="UP000000559">
    <property type="component" value="Mitochondrion"/>
</dbReference>
<dbReference type="GO" id="GO:0000792">
    <property type="term" value="C:heterochromatin"/>
    <property type="evidence" value="ECO:0000250"/>
    <property type="project" value="CGD"/>
</dbReference>
<dbReference type="GO" id="GO:0016020">
    <property type="term" value="C:membrane"/>
    <property type="evidence" value="ECO:0000318"/>
    <property type="project" value="GO_Central"/>
</dbReference>
<dbReference type="GO" id="GO:0005743">
    <property type="term" value="C:mitochondrial inner membrane"/>
    <property type="evidence" value="ECO:0007669"/>
    <property type="project" value="UniProtKB-SubCell"/>
</dbReference>
<dbReference type="GO" id="GO:0045275">
    <property type="term" value="C:respiratory chain complex III"/>
    <property type="evidence" value="ECO:0000250"/>
    <property type="project" value="CGD"/>
</dbReference>
<dbReference type="GO" id="GO:0046872">
    <property type="term" value="F:metal ion binding"/>
    <property type="evidence" value="ECO:0007669"/>
    <property type="project" value="UniProtKB-KW"/>
</dbReference>
<dbReference type="GO" id="GO:0008121">
    <property type="term" value="F:ubiquinol-cytochrome-c reductase activity"/>
    <property type="evidence" value="ECO:0000250"/>
    <property type="project" value="CGD"/>
</dbReference>
<dbReference type="GO" id="GO:0006122">
    <property type="term" value="P:mitochondrial electron transport, ubiquinol to cytochrome c"/>
    <property type="evidence" value="ECO:0000250"/>
    <property type="project" value="CGD"/>
</dbReference>
<dbReference type="CDD" id="cd00290">
    <property type="entry name" value="cytochrome_b_C"/>
    <property type="match status" value="1"/>
</dbReference>
<dbReference type="CDD" id="cd00284">
    <property type="entry name" value="Cytochrome_b_N"/>
    <property type="match status" value="1"/>
</dbReference>
<dbReference type="FunFam" id="1.20.810.10:FF:000002">
    <property type="entry name" value="Cytochrome b"/>
    <property type="match status" value="1"/>
</dbReference>
<dbReference type="Gene3D" id="1.20.810.10">
    <property type="entry name" value="Cytochrome Bc1 Complex, Chain C"/>
    <property type="match status" value="1"/>
</dbReference>
<dbReference type="InterPro" id="IPR005798">
    <property type="entry name" value="Cyt_b/b6_C"/>
</dbReference>
<dbReference type="InterPro" id="IPR036150">
    <property type="entry name" value="Cyt_b/b6_C_sf"/>
</dbReference>
<dbReference type="InterPro" id="IPR005797">
    <property type="entry name" value="Cyt_b/b6_N"/>
</dbReference>
<dbReference type="InterPro" id="IPR027387">
    <property type="entry name" value="Cytb/b6-like_sf"/>
</dbReference>
<dbReference type="InterPro" id="IPR030689">
    <property type="entry name" value="Cytochrome_b"/>
</dbReference>
<dbReference type="InterPro" id="IPR048260">
    <property type="entry name" value="Cytochrome_b_C_euk/bac"/>
</dbReference>
<dbReference type="InterPro" id="IPR048259">
    <property type="entry name" value="Cytochrome_b_N_euk/bac"/>
</dbReference>
<dbReference type="InterPro" id="IPR016174">
    <property type="entry name" value="Di-haem_cyt_TM"/>
</dbReference>
<dbReference type="PANTHER" id="PTHR19271">
    <property type="entry name" value="CYTOCHROME B"/>
    <property type="match status" value="1"/>
</dbReference>
<dbReference type="PANTHER" id="PTHR19271:SF16">
    <property type="entry name" value="CYTOCHROME B"/>
    <property type="match status" value="1"/>
</dbReference>
<dbReference type="Pfam" id="PF00032">
    <property type="entry name" value="Cytochrom_B_C"/>
    <property type="match status" value="1"/>
</dbReference>
<dbReference type="Pfam" id="PF00033">
    <property type="entry name" value="Cytochrome_B"/>
    <property type="match status" value="1"/>
</dbReference>
<dbReference type="PIRSF" id="PIRSF038885">
    <property type="entry name" value="COB"/>
    <property type="match status" value="1"/>
</dbReference>
<dbReference type="SUPFAM" id="SSF81648">
    <property type="entry name" value="a domain/subunit of cytochrome bc1 complex (Ubiquinol-cytochrome c reductase)"/>
    <property type="match status" value="1"/>
</dbReference>
<dbReference type="SUPFAM" id="SSF81342">
    <property type="entry name" value="Transmembrane di-heme cytochromes"/>
    <property type="match status" value="1"/>
</dbReference>
<dbReference type="PROSITE" id="PS51003">
    <property type="entry name" value="CYTB_CTER"/>
    <property type="match status" value="1"/>
</dbReference>
<dbReference type="PROSITE" id="PS51002">
    <property type="entry name" value="CYTB_NTER"/>
    <property type="match status" value="1"/>
</dbReference>
<name>CYB_CANAL</name>